<sequence>MIDKSRSCIGFAISLLFHASFVSFLYWIVQKDDDSANGFAADIISTHISMEMLAATVLEEPEPEPEPAPPVVEPELPKEEVADPTVKPEPPKEPEKPKEPEKPKEKPKEKPKEKPKKPKKEQRDLPKSDRQIDSNSSINQQATTTGNITTNNPNLVGKGNSTDEVNAYRSALRREIEKHKRYPNRARMMRKQGVVTITFHLNNAGVISNARISKSSGSEELDNAALVAVNNARPIGPLPAGMPNEVSVPVSFRITN</sequence>
<accession>Q9ZH79</accession>
<reference key="1">
    <citation type="submission" date="1998-06" db="EMBL/GenBank/DDBJ databases">
        <title>Pasteurella multocida tonB gene, complete cds, and exbD gene, partial cds.</title>
        <authorList>
            <person name="Tarrago R."/>
            <person name="Badiola I."/>
            <person name="Barbe J."/>
        </authorList>
    </citation>
    <scope>NUCLEOTIDE SEQUENCE [GENOMIC DNA]</scope>
    <source>
        <strain>Pm25</strain>
    </source>
</reference>
<reference key="2">
    <citation type="journal article" date="2001" name="Proc. Natl. Acad. Sci. U.S.A.">
        <title>Complete genomic sequence of Pasteurella multocida Pm70.</title>
        <authorList>
            <person name="May B.J."/>
            <person name="Zhang Q."/>
            <person name="Li L.L."/>
            <person name="Paustian M.L."/>
            <person name="Whittam T.S."/>
            <person name="Kapur V."/>
        </authorList>
    </citation>
    <scope>NUCLEOTIDE SEQUENCE [LARGE SCALE GENOMIC DNA]</scope>
    <source>
        <strain>Pm70</strain>
    </source>
</reference>
<name>TONB_PASMU</name>
<protein>
    <recommendedName>
        <fullName>Protein TonB</fullName>
    </recommendedName>
</protein>
<proteinExistence type="inferred from homology"/>
<organism>
    <name type="scientific">Pasteurella multocida (strain Pm70)</name>
    <dbReference type="NCBI Taxonomy" id="272843"/>
    <lineage>
        <taxon>Bacteria</taxon>
        <taxon>Pseudomonadati</taxon>
        <taxon>Pseudomonadota</taxon>
        <taxon>Gammaproteobacteria</taxon>
        <taxon>Pasteurellales</taxon>
        <taxon>Pasteurellaceae</taxon>
        <taxon>Pasteurella</taxon>
    </lineage>
</organism>
<evidence type="ECO:0000250" key="1"/>
<evidence type="ECO:0000255" key="2"/>
<evidence type="ECO:0000255" key="3">
    <source>
        <dbReference type="PROSITE-ProRule" id="PRU01359"/>
    </source>
</evidence>
<evidence type="ECO:0000256" key="4">
    <source>
        <dbReference type="SAM" id="MobiDB-lite"/>
    </source>
</evidence>
<evidence type="ECO:0000305" key="5"/>
<keyword id="KW-0997">Cell inner membrane</keyword>
<keyword id="KW-1003">Cell membrane</keyword>
<keyword id="KW-0472">Membrane</keyword>
<keyword id="KW-0653">Protein transport</keyword>
<keyword id="KW-1185">Reference proteome</keyword>
<keyword id="KW-0735">Signal-anchor</keyword>
<keyword id="KW-0812">Transmembrane</keyword>
<keyword id="KW-1133">Transmembrane helix</keyword>
<keyword id="KW-0813">Transport</keyword>
<feature type="chain" id="PRO_0000196206" description="Protein TonB">
    <location>
        <begin position="1"/>
        <end position="256"/>
    </location>
</feature>
<feature type="topological domain" description="Cytoplasmic" evidence="2">
    <location>
        <begin position="1"/>
        <end position="8"/>
    </location>
</feature>
<feature type="transmembrane region" description="Helical; Signal-anchor" evidence="2">
    <location>
        <begin position="9"/>
        <end position="29"/>
    </location>
</feature>
<feature type="topological domain" description="Periplasmic" evidence="2">
    <location>
        <begin position="30"/>
        <end position="256"/>
    </location>
</feature>
<feature type="domain" description="TonB C-terminal" evidence="3">
    <location>
        <begin position="167"/>
        <end position="256"/>
    </location>
</feature>
<feature type="region of interest" description="Disordered" evidence="4">
    <location>
        <begin position="59"/>
        <end position="162"/>
    </location>
</feature>
<feature type="compositionally biased region" description="Basic and acidic residues" evidence="4">
    <location>
        <begin position="89"/>
        <end position="112"/>
    </location>
</feature>
<feature type="compositionally biased region" description="Basic and acidic residues" evidence="4">
    <location>
        <begin position="121"/>
        <end position="132"/>
    </location>
</feature>
<feature type="compositionally biased region" description="Low complexity" evidence="4">
    <location>
        <begin position="138"/>
        <end position="154"/>
    </location>
</feature>
<dbReference type="EMBL" id="AF070473">
    <property type="protein sequence ID" value="AAC83227.1"/>
    <property type="molecule type" value="Genomic_DNA"/>
</dbReference>
<dbReference type="EMBL" id="AE004439">
    <property type="protein sequence ID" value="AAK03272.1"/>
    <property type="molecule type" value="Genomic_DNA"/>
</dbReference>
<dbReference type="RefSeq" id="WP_005751877.1">
    <property type="nucleotide sequence ID" value="NC_002663.1"/>
</dbReference>
<dbReference type="SMR" id="Q9ZH79"/>
<dbReference type="STRING" id="272843.PM1188"/>
<dbReference type="EnsemblBacteria" id="AAK03272">
    <property type="protein sequence ID" value="AAK03272"/>
    <property type="gene ID" value="PM1188"/>
</dbReference>
<dbReference type="KEGG" id="pmu:PM1188"/>
<dbReference type="HOGENOM" id="CLU_076333_5_0_6"/>
<dbReference type="OrthoDB" id="9115347at2"/>
<dbReference type="Proteomes" id="UP000000809">
    <property type="component" value="Chromosome"/>
</dbReference>
<dbReference type="GO" id="GO:0030288">
    <property type="term" value="C:outer membrane-bounded periplasmic space"/>
    <property type="evidence" value="ECO:0007669"/>
    <property type="project" value="InterPro"/>
</dbReference>
<dbReference type="GO" id="GO:0098797">
    <property type="term" value="C:plasma membrane protein complex"/>
    <property type="evidence" value="ECO:0007669"/>
    <property type="project" value="TreeGrafter"/>
</dbReference>
<dbReference type="GO" id="GO:0031992">
    <property type="term" value="F:energy transducer activity"/>
    <property type="evidence" value="ECO:0007669"/>
    <property type="project" value="InterPro"/>
</dbReference>
<dbReference type="GO" id="GO:0015031">
    <property type="term" value="P:protein transport"/>
    <property type="evidence" value="ECO:0007669"/>
    <property type="project" value="UniProtKB-KW"/>
</dbReference>
<dbReference type="GO" id="GO:0015891">
    <property type="term" value="P:siderophore transport"/>
    <property type="evidence" value="ECO:0007669"/>
    <property type="project" value="InterPro"/>
</dbReference>
<dbReference type="GO" id="GO:0055085">
    <property type="term" value="P:transmembrane transport"/>
    <property type="evidence" value="ECO:0007669"/>
    <property type="project" value="InterPro"/>
</dbReference>
<dbReference type="Gene3D" id="3.30.1150.10">
    <property type="match status" value="1"/>
</dbReference>
<dbReference type="InterPro" id="IPR003538">
    <property type="entry name" value="TonB"/>
</dbReference>
<dbReference type="InterPro" id="IPR051045">
    <property type="entry name" value="TonB-dependent_transducer"/>
</dbReference>
<dbReference type="InterPro" id="IPR006260">
    <property type="entry name" value="TonB/TolA_C"/>
</dbReference>
<dbReference type="InterPro" id="IPR037682">
    <property type="entry name" value="TonB_C"/>
</dbReference>
<dbReference type="NCBIfam" id="TIGR01352">
    <property type="entry name" value="tonB_Cterm"/>
    <property type="match status" value="1"/>
</dbReference>
<dbReference type="PANTHER" id="PTHR33446:SF2">
    <property type="entry name" value="PROTEIN TONB"/>
    <property type="match status" value="1"/>
</dbReference>
<dbReference type="PANTHER" id="PTHR33446">
    <property type="entry name" value="PROTEIN TONB-RELATED"/>
    <property type="match status" value="1"/>
</dbReference>
<dbReference type="Pfam" id="PF03544">
    <property type="entry name" value="TonB_C"/>
    <property type="match status" value="1"/>
</dbReference>
<dbReference type="PRINTS" id="PR01374">
    <property type="entry name" value="TONBPROTEIN"/>
</dbReference>
<dbReference type="SUPFAM" id="SSF74653">
    <property type="entry name" value="TolA/TonB C-terminal domain"/>
    <property type="match status" value="1"/>
</dbReference>
<dbReference type="PROSITE" id="PS52015">
    <property type="entry name" value="TONB_CTD"/>
    <property type="match status" value="1"/>
</dbReference>
<comment type="function">
    <text evidence="1">Interacts with outer membrane receptor proteins that carry out high-affinity binding and energy dependent uptake into the periplasmic space of specific substrates. It could act to transduce energy from the cytoplasmic membrane to specific energy-requiring processes in the outer membrane, resulting in the release into the periplasm of ligands bound by these outer membrane proteins (By similarity).</text>
</comment>
<comment type="subcellular location">
    <subcellularLocation>
        <location evidence="1">Cell inner membrane</location>
        <topology evidence="1">Single-pass membrane protein</topology>
        <orientation evidence="1">Periplasmic side</orientation>
    </subcellularLocation>
</comment>
<comment type="similarity">
    <text evidence="5">Belongs to the TonB family.</text>
</comment>
<gene>
    <name type="primary">tonB</name>
    <name type="ordered locus">PM1188</name>
</gene>